<dbReference type="EC" id="1.14.18.-" evidence="9"/>
<dbReference type="EMBL" id="AAHF01000014">
    <property type="protein sequence ID" value="EAL84924.1"/>
    <property type="molecule type" value="Genomic_DNA"/>
</dbReference>
<dbReference type="RefSeq" id="XP_746962.1">
    <property type="nucleotide sequence ID" value="XM_741869.1"/>
</dbReference>
<dbReference type="STRING" id="330879.Q4WBI8"/>
<dbReference type="GlyCosmos" id="Q4WBI8">
    <property type="glycosylation" value="2 sites, No reported glycans"/>
</dbReference>
<dbReference type="EnsemblFungi" id="EAL84924">
    <property type="protein sequence ID" value="EAL84924"/>
    <property type="gene ID" value="AFUA_8G02440"/>
</dbReference>
<dbReference type="GeneID" id="3504393"/>
<dbReference type="KEGG" id="afm:AFUA_8G02440"/>
<dbReference type="VEuPathDB" id="FungiDB:Afu8g02440"/>
<dbReference type="eggNOG" id="KOG0873">
    <property type="taxonomic scope" value="Eukaryota"/>
</dbReference>
<dbReference type="HOGENOM" id="CLU_047036_5_0_1"/>
<dbReference type="InParanoid" id="Q4WBI8"/>
<dbReference type="OMA" id="VPWLYKT"/>
<dbReference type="OrthoDB" id="1658724at2759"/>
<dbReference type="UniPathway" id="UPA00768"/>
<dbReference type="Proteomes" id="UP000002530">
    <property type="component" value="Chromosome 8"/>
</dbReference>
<dbReference type="GO" id="GO:0005789">
    <property type="term" value="C:endoplasmic reticulum membrane"/>
    <property type="evidence" value="ECO:0000318"/>
    <property type="project" value="GO_Central"/>
</dbReference>
<dbReference type="GO" id="GO:0000254">
    <property type="term" value="F:C-4 methylsterol oxidase activity"/>
    <property type="evidence" value="ECO:0000318"/>
    <property type="project" value="GO_Central"/>
</dbReference>
<dbReference type="GO" id="GO:0005506">
    <property type="term" value="F:iron ion binding"/>
    <property type="evidence" value="ECO:0007669"/>
    <property type="project" value="InterPro"/>
</dbReference>
<dbReference type="GO" id="GO:0006696">
    <property type="term" value="P:ergosterol biosynthetic process"/>
    <property type="evidence" value="ECO:0000318"/>
    <property type="project" value="GO_Central"/>
</dbReference>
<dbReference type="InterPro" id="IPR006694">
    <property type="entry name" value="Fatty_acid_hydroxylase"/>
</dbReference>
<dbReference type="InterPro" id="IPR050307">
    <property type="entry name" value="Sterol_Desaturase_Related"/>
</dbReference>
<dbReference type="PANTHER" id="PTHR11863">
    <property type="entry name" value="STEROL DESATURASE"/>
    <property type="match status" value="1"/>
</dbReference>
<dbReference type="Pfam" id="PF04116">
    <property type="entry name" value="FA_hydroxylase"/>
    <property type="match status" value="1"/>
</dbReference>
<keyword id="KW-0256">Endoplasmic reticulum</keyword>
<keyword id="KW-0325">Glycoprotein</keyword>
<keyword id="KW-0444">Lipid biosynthesis</keyword>
<keyword id="KW-0443">Lipid metabolism</keyword>
<keyword id="KW-0472">Membrane</keyword>
<keyword id="KW-0560">Oxidoreductase</keyword>
<keyword id="KW-1185">Reference proteome</keyword>
<keyword id="KW-0752">Steroid biosynthesis</keyword>
<keyword id="KW-0753">Steroid metabolism</keyword>
<keyword id="KW-0756">Sterol biosynthesis</keyword>
<keyword id="KW-1207">Sterol metabolism</keyword>
<keyword id="KW-0812">Transmembrane</keyword>
<keyword id="KW-1133">Transmembrane helix</keyword>
<feature type="chain" id="PRO_0000454127" description="Methylsterol monooxygenase erg25A">
    <location>
        <begin position="1"/>
        <end position="302"/>
    </location>
</feature>
<feature type="transmembrane region" description="Helical" evidence="2">
    <location>
        <begin position="47"/>
        <end position="67"/>
    </location>
</feature>
<feature type="transmembrane region" description="Helical" evidence="2">
    <location>
        <begin position="105"/>
        <end position="125"/>
    </location>
</feature>
<feature type="transmembrane region" description="Helical" evidence="2">
    <location>
        <begin position="132"/>
        <end position="152"/>
    </location>
</feature>
<feature type="transmembrane region" description="Helical" evidence="2">
    <location>
        <begin position="193"/>
        <end position="213"/>
    </location>
</feature>
<feature type="domain" description="Fatty acid hydroxylase" evidence="2">
    <location>
        <begin position="147"/>
        <end position="283"/>
    </location>
</feature>
<feature type="short sequence motif" description="Histidine box-1" evidence="9">
    <location>
        <begin position="161"/>
        <end position="165"/>
    </location>
</feature>
<feature type="short sequence motif" description="Histidine box-2" evidence="9">
    <location>
        <begin position="174"/>
        <end position="178"/>
    </location>
</feature>
<feature type="short sequence motif" description="Histidine box-3" evidence="9">
    <location>
        <begin position="258"/>
        <end position="264"/>
    </location>
</feature>
<feature type="glycosylation site" description="N-linked (GlcNAc...) asparagine" evidence="3">
    <location>
        <position position="5"/>
    </location>
</feature>
<feature type="glycosylation site" description="N-linked (GlcNAc...) asparagine" evidence="3">
    <location>
        <position position="269"/>
    </location>
</feature>
<comment type="function">
    <text evidence="4 7 8">Sterol-C4-methyl oxidase; part of the third module of ergosterol biosynthesis pathway that includes the late steps of the pathway (PubMed:25107308). Erg25A is a catalytic component of the C-4 demethylation complex that catalyzes the conversion of 4,4-dimethylfecosterol into fecosterol via 4-methylfecosterol (PubMed:25107308). The third module or late pathway involves the ergosterol synthesis itself through consecutive reactions that mainly occur in the endoplasmic reticulum (ER) membrane. Firstly, the squalene synthase erg9 catalyzes the condensation of 2 farnesyl pyrophosphate moieties to form squalene, which is the precursor of all steroids. Squalene synthase is crucial for balancing the incorporation of farnesyl diphosphate (FPP) into sterol and nonsterol isoprene synthesis. Secondly, squalene is converted into lanosterol by the consecutive action of the squalene epoxidase erg1 and the lanosterol synthase erg7. Then, the delta(24)-sterol C-methyltransferase erg6 methylates lanosterol at C-24 to produce eburicol. Eburicol is the substrate of the sterol 14-alpha demethylase encoded by cyp51A and cyp51B, to yield 4,4,24-trimethyl ergosta-8,14,24(28)-trienol. The C-14 reductase erg24 then reduces the C14=C15 double bond which leads to 4,4-dimethylfecosterol. A sequence of further demethylations at C-4, involving the C-4 demethylation complex containing the C-4 methylsterol oxidases erg25A or erg25B, the sterol-4-alpha-carboxylate 3-dehydrogenase erg26 and the 3-keto-steroid reductase erg27, leads to the production of fecosterol via 4-methylfecosterol. The C-8 sterol isomerase erg2 then catalyzes the reaction which results in unsaturation at C-7 in the B ring of sterols and thus converts fecosterol to episterol. The sterol-C5-desaturase erg3B then catalyzes the introduction of a C-5 double bond in the B ring to produce 5-dehydroepisterol. The 2 other sterol-C5-desaturases, erg3A and erg3C, seem to be less important in ergosterol biosynthesis. The C-22 sterol desaturase erg5 further converts 5-dehydroepisterol into ergosta-5,7,22,24(28)-tetraen-3beta-ol by forming the C-22(23) double bond in the sterol side chain. Finally, ergosta-5,7,22,24(28)-tetraen-3beta-ol is substrate of the C-24(28) sterol reductases erg4A and erg4B to produce ergosterol. Possible alternative sterol biosynthetic pathways might exist from fecosterol to ergosterol, depending on the activities of the erg3 isoforms (Probable) (PubMed:16110826, PubMed:18191972).</text>
</comment>
<comment type="cofactor">
    <cofactor evidence="1">
        <name>Fe cation</name>
        <dbReference type="ChEBI" id="CHEBI:24875"/>
    </cofactor>
</comment>
<comment type="pathway">
    <text evidence="4">Steroid metabolism; ergosterol biosynthesis.</text>
</comment>
<comment type="subcellular location">
    <subcellularLocation>
        <location evidence="6">Endoplasmic reticulum membrane</location>
        <topology evidence="2">Multi-pass membrane protein</topology>
    </subcellularLocation>
</comment>
<comment type="induction">
    <text evidence="4">Expression is controlled by the transcriptional regulator srbA.</text>
</comment>
<comment type="domain">
    <text evidence="9">The histidine box domains may contain the active site and/or be involved in metal ion binding.</text>
</comment>
<comment type="disruption phenotype">
    <text evidence="4">Leads to the accumulation of 4-methyl fecosterol and 4,4-dimethyl fecosterol (PubMed:25107308). Displays a dmoderate susceptibility to hypoxia and the endoplasmic reticulum stress-inducing agent DTT, but does not affect virulence in murine or insect models of invasive aspergillosis (PubMed:25107308).</text>
</comment>
<comment type="miscellaneous">
    <text evidence="8">In Aspergillus, the biosynthesis pathway of the sterol precursors leading to the prevalent sterol ergosterol differs from yeast. The ring system of lanosterol in S.cerevisiae is firstly demethylised in three enzymatic steps leading to the intermediate zymosterol and secondly a methyl group is added to zymosterol by the sterol 24-C-methyltransferase to form fecosterol. In Aspergillus, lanosterol is firstly transmethylated by the sterol 24-C-methyltransferase leading to the intermediate eburicol and secondly demethylated in three steps to form fecosterol.</text>
</comment>
<comment type="similarity">
    <text evidence="6">Belongs to the sterol desaturase family.</text>
</comment>
<sequence length="302" mass="35109">MDSLNSSYPQSAMATYSDLLDLAAQQQPHLSGLERLWWAHYAYWDNNIVATATGIITFLAHEIIYFSRCLPWIIADSLPSIFLKYKIQDQKPPPSAAEQWACTKYILLIHFVVELPLIVLFHPMMELCGLSFTIPFPDLRTLTAQIIIFFLLEDTYHYWLHRAMHWGPLYRSIHRIHHQYAAPFGLTAEYASPWETLLLGLGTIGPPLLLALMDCNVHLVTVLAWVTLRQFQAIDSHSGYDFPWSLRRILPFWGGADWHDDHHRYFWGNYSSSFRHWDVLMGTVAGPEAREKRRAEREKRQA</sequence>
<evidence type="ECO:0000250" key="1">
    <source>
        <dbReference type="UniProtKB" id="P53045"/>
    </source>
</evidence>
<evidence type="ECO:0000255" key="2"/>
<evidence type="ECO:0000255" key="3">
    <source>
        <dbReference type="PROSITE-ProRule" id="PRU00498"/>
    </source>
</evidence>
<evidence type="ECO:0000269" key="4">
    <source>
    </source>
</evidence>
<evidence type="ECO:0000303" key="5">
    <source>
    </source>
</evidence>
<evidence type="ECO:0000305" key="6"/>
<evidence type="ECO:0000305" key="7">
    <source>
    </source>
</evidence>
<evidence type="ECO:0000305" key="8">
    <source>
    </source>
</evidence>
<evidence type="ECO:0000305" key="9">
    <source>
    </source>
</evidence>
<reference key="1">
    <citation type="journal article" date="2005" name="Nature">
        <title>Genomic sequence of the pathogenic and allergenic filamentous fungus Aspergillus fumigatus.</title>
        <authorList>
            <person name="Nierman W.C."/>
            <person name="Pain A."/>
            <person name="Anderson M.J."/>
            <person name="Wortman J.R."/>
            <person name="Kim H.S."/>
            <person name="Arroyo J."/>
            <person name="Berriman M."/>
            <person name="Abe K."/>
            <person name="Archer D.B."/>
            <person name="Bermejo C."/>
            <person name="Bennett J.W."/>
            <person name="Bowyer P."/>
            <person name="Chen D."/>
            <person name="Collins M."/>
            <person name="Coulsen R."/>
            <person name="Davies R."/>
            <person name="Dyer P.S."/>
            <person name="Farman M.L."/>
            <person name="Fedorova N."/>
            <person name="Fedorova N.D."/>
            <person name="Feldblyum T.V."/>
            <person name="Fischer R."/>
            <person name="Fosker N."/>
            <person name="Fraser A."/>
            <person name="Garcia J.L."/>
            <person name="Garcia M.J."/>
            <person name="Goble A."/>
            <person name="Goldman G.H."/>
            <person name="Gomi K."/>
            <person name="Griffith-Jones S."/>
            <person name="Gwilliam R."/>
            <person name="Haas B.J."/>
            <person name="Haas H."/>
            <person name="Harris D.E."/>
            <person name="Horiuchi H."/>
            <person name="Huang J."/>
            <person name="Humphray S."/>
            <person name="Jimenez J."/>
            <person name="Keller N."/>
            <person name="Khouri H."/>
            <person name="Kitamoto K."/>
            <person name="Kobayashi T."/>
            <person name="Konzack S."/>
            <person name="Kulkarni R."/>
            <person name="Kumagai T."/>
            <person name="Lafton A."/>
            <person name="Latge J.-P."/>
            <person name="Li W."/>
            <person name="Lord A."/>
            <person name="Lu C."/>
            <person name="Majoros W.H."/>
            <person name="May G.S."/>
            <person name="Miller B.L."/>
            <person name="Mohamoud Y."/>
            <person name="Molina M."/>
            <person name="Monod M."/>
            <person name="Mouyna I."/>
            <person name="Mulligan S."/>
            <person name="Murphy L.D."/>
            <person name="O'Neil S."/>
            <person name="Paulsen I."/>
            <person name="Penalva M.A."/>
            <person name="Pertea M."/>
            <person name="Price C."/>
            <person name="Pritchard B.L."/>
            <person name="Quail M.A."/>
            <person name="Rabbinowitsch E."/>
            <person name="Rawlins N."/>
            <person name="Rajandream M.A."/>
            <person name="Reichard U."/>
            <person name="Renauld H."/>
            <person name="Robson G.D."/>
            <person name="Rodriguez de Cordoba S."/>
            <person name="Rodriguez-Pena J.M."/>
            <person name="Ronning C.M."/>
            <person name="Rutter S."/>
            <person name="Salzberg S.L."/>
            <person name="Sanchez M."/>
            <person name="Sanchez-Ferrero J.C."/>
            <person name="Saunders D."/>
            <person name="Seeger K."/>
            <person name="Squares R."/>
            <person name="Squares S."/>
            <person name="Takeuchi M."/>
            <person name="Tekaia F."/>
            <person name="Turner G."/>
            <person name="Vazquez de Aldana C.R."/>
            <person name="Weidman J."/>
            <person name="White O."/>
            <person name="Woodward J.R."/>
            <person name="Yu J.-H."/>
            <person name="Fraser C.M."/>
            <person name="Galagan J.E."/>
            <person name="Asai K."/>
            <person name="Machida M."/>
            <person name="Hall N."/>
            <person name="Barrell B.G."/>
            <person name="Denning D.W."/>
        </authorList>
    </citation>
    <scope>NUCLEOTIDE SEQUENCE [LARGE SCALE GENOMIC DNA]</scope>
    <source>
        <strain>ATCC MYA-4609 / CBS 101355 / FGSC A1100 / Af293</strain>
    </source>
</reference>
<reference key="2">
    <citation type="journal article" date="2005" name="Med. Mycol.">
        <title>The ergosterol biosynthesis pathway, transporter genes, and azole resistance in Aspergillus fumigatus.</title>
        <authorList>
            <person name="Ferreira M.E."/>
            <person name="Colombo A.L."/>
            <person name="Paulsen I."/>
            <person name="Ren Q."/>
            <person name="Wortman J."/>
            <person name="Huang J."/>
            <person name="Goldman M.H."/>
            <person name="Goldman G.H."/>
        </authorList>
    </citation>
    <scope>IDENTIFICATION</scope>
    <scope>FUNCTION</scope>
    <scope>PATHWAY</scope>
</reference>
<reference key="3">
    <citation type="journal article" date="2008" name="Steroids">
        <title>Ergosterol biosynthesis pathway in Aspergillus fumigatus.</title>
        <authorList>
            <person name="Alcazar-Fuoli L."/>
            <person name="Mellado E."/>
            <person name="Garcia-Effron G."/>
            <person name="Lopez J.F."/>
            <person name="Grimalt J.O."/>
            <person name="Cuenca-Estrella J.M."/>
            <person name="Rodriguez-Tudela J.L."/>
        </authorList>
    </citation>
    <scope>FUNCTION</scope>
</reference>
<reference key="4">
    <citation type="journal article" date="2014" name="Microbiology">
        <title>Two C4-sterol methyl oxidases (Erg25) catalyse ergosterol intermediate demethylation and impact environmental stress adaptation in Aspergillus fumigatus.</title>
        <authorList>
            <person name="Blosser S.J."/>
            <person name="Merriman B."/>
            <person name="Grahl N."/>
            <person name="Chung D."/>
            <person name="Cramer R.A."/>
        </authorList>
    </citation>
    <scope>FUNCTION</scope>
    <scope>DOMAIN</scope>
    <scope>DISRUPTION PHENOTYPE</scope>
    <scope>INDUCTION</scope>
    <scope>PATHWAY</scope>
</reference>
<accession>Q4WBI8</accession>
<organism>
    <name type="scientific">Aspergillus fumigatus (strain ATCC MYA-4609 / CBS 101355 / FGSC A1100 / Af293)</name>
    <name type="common">Neosartorya fumigata</name>
    <dbReference type="NCBI Taxonomy" id="330879"/>
    <lineage>
        <taxon>Eukaryota</taxon>
        <taxon>Fungi</taxon>
        <taxon>Dikarya</taxon>
        <taxon>Ascomycota</taxon>
        <taxon>Pezizomycotina</taxon>
        <taxon>Eurotiomycetes</taxon>
        <taxon>Eurotiomycetidae</taxon>
        <taxon>Eurotiales</taxon>
        <taxon>Aspergillaceae</taxon>
        <taxon>Aspergillus</taxon>
        <taxon>Aspergillus subgen. Fumigati</taxon>
    </lineage>
</organism>
<gene>
    <name evidence="5" type="primary">erg25A</name>
    <name type="ORF">AFUA_8G02440</name>
</gene>
<protein>
    <recommendedName>
        <fullName evidence="5">Methylsterol monooxygenase erg25A</fullName>
        <ecNumber evidence="9">1.14.18.-</ecNumber>
    </recommendedName>
    <alternativeName>
        <fullName evidence="5">C-4 methylsterol oxidase erg25A</fullName>
    </alternativeName>
    <alternativeName>
        <fullName evidence="5">Ergosterol biosynthesis protein 25A</fullName>
    </alternativeName>
    <alternativeName>
        <fullName evidence="5">Sterol-C4-methyl oxidase erg25A</fullName>
        <shortName evidence="5">SMO</shortName>
    </alternativeName>
</protein>
<proteinExistence type="evidence at transcript level"/>
<name>ER25A_ASPFU</name>